<gene>
    <name evidence="1" type="primary">rpoC</name>
    <name type="ordered locus">BbuZS7_0390</name>
</gene>
<feature type="chain" id="PRO_1000141759" description="DNA-directed RNA polymerase subunit beta'">
    <location>
        <begin position="1"/>
        <end position="1377"/>
    </location>
</feature>
<feature type="binding site" evidence="1">
    <location>
        <position position="60"/>
    </location>
    <ligand>
        <name>Zn(2+)</name>
        <dbReference type="ChEBI" id="CHEBI:29105"/>
        <label>1</label>
    </ligand>
</feature>
<feature type="binding site" evidence="1">
    <location>
        <position position="62"/>
    </location>
    <ligand>
        <name>Zn(2+)</name>
        <dbReference type="ChEBI" id="CHEBI:29105"/>
        <label>1</label>
    </ligand>
</feature>
<feature type="binding site" evidence="1">
    <location>
        <position position="75"/>
    </location>
    <ligand>
        <name>Zn(2+)</name>
        <dbReference type="ChEBI" id="CHEBI:29105"/>
        <label>1</label>
    </ligand>
</feature>
<feature type="binding site" evidence="1">
    <location>
        <position position="78"/>
    </location>
    <ligand>
        <name>Zn(2+)</name>
        <dbReference type="ChEBI" id="CHEBI:29105"/>
        <label>1</label>
    </ligand>
</feature>
<feature type="binding site" evidence="1">
    <location>
        <position position="449"/>
    </location>
    <ligand>
        <name>Mg(2+)</name>
        <dbReference type="ChEBI" id="CHEBI:18420"/>
    </ligand>
</feature>
<feature type="binding site" evidence="1">
    <location>
        <position position="451"/>
    </location>
    <ligand>
        <name>Mg(2+)</name>
        <dbReference type="ChEBI" id="CHEBI:18420"/>
    </ligand>
</feature>
<feature type="binding site" evidence="1">
    <location>
        <position position="453"/>
    </location>
    <ligand>
        <name>Mg(2+)</name>
        <dbReference type="ChEBI" id="CHEBI:18420"/>
    </ligand>
</feature>
<feature type="binding site" evidence="1">
    <location>
        <position position="777"/>
    </location>
    <ligand>
        <name>Zn(2+)</name>
        <dbReference type="ChEBI" id="CHEBI:29105"/>
        <label>2</label>
    </ligand>
</feature>
<feature type="binding site" evidence="1">
    <location>
        <position position="851"/>
    </location>
    <ligand>
        <name>Zn(2+)</name>
        <dbReference type="ChEBI" id="CHEBI:29105"/>
        <label>2</label>
    </ligand>
</feature>
<feature type="binding site" evidence="1">
    <location>
        <position position="858"/>
    </location>
    <ligand>
        <name>Zn(2+)</name>
        <dbReference type="ChEBI" id="CHEBI:29105"/>
        <label>2</label>
    </ligand>
</feature>
<feature type="binding site" evidence="1">
    <location>
        <position position="861"/>
    </location>
    <ligand>
        <name>Zn(2+)</name>
        <dbReference type="ChEBI" id="CHEBI:29105"/>
        <label>2</label>
    </ligand>
</feature>
<proteinExistence type="inferred from homology"/>
<accession>B7J1W0</accession>
<organism>
    <name type="scientific">Borreliella burgdorferi (strain ZS7)</name>
    <name type="common">Borrelia burgdorferi</name>
    <dbReference type="NCBI Taxonomy" id="445985"/>
    <lineage>
        <taxon>Bacteria</taxon>
        <taxon>Pseudomonadati</taxon>
        <taxon>Spirochaetota</taxon>
        <taxon>Spirochaetia</taxon>
        <taxon>Spirochaetales</taxon>
        <taxon>Borreliaceae</taxon>
        <taxon>Borreliella</taxon>
    </lineage>
</organism>
<sequence length="1377" mass="154637">MKEIKDFERIKIKIASPDQIRNWSYGEVKKSETINYRTLRPEKDGLFCERIFGTTKEWECYCGKFKSVRYKGIICDRCNVEVTHFKVRRERMGHIELAAPVAHIWYYKYIPSRIGLLLDITASSLNSILYYEKYVVIEPGDTDLKKMQLLNEDEYIEARERYGMSFNASMGAEAIKTLLENLDLDELSSKLRIQMIDKDDKTDKKLLRRLEIIENFKISGNKPEWMIMEVLPVIPPEIRPMVQLDGGRFATSDLNDLYRRVINRNNRLRKLLLLNAPEIIVRNEKRMLQESVDSLFDNSHKRKVVKGSSSRPLKSLSDALKGKQGRFRQNLLGKRVDYSGRSVIVVGPELKLHQCGLPAKMALELFKPFVIRRLIESEAVFNIKRAKNLIEQEVDEVWQILDLVIKEHPILLNRAPTLHRLGIQAFEPVLVEGKAIKLHPLVCHAYNADFDGDQMAVHVPLTPAAQAESWALMLSTNNLLNPANGHPIVFPSQDIVLGLYYLTMEKKNVIGEGKKFLNFNNVILAINNRSLDYNASIYVKIDGEYKKTTAGRVIFNEALPKGIEFVNKTLSDLELQILISKVYVVHGSSTVIEMLDIIKELGFRYATKFGCTISMSDIIVPDEKRTYVERANKEIAKIQNDYAKGVITGEERYNNVVSVWLKTNEELTNKMMEILKKDRDGFNVIYMMADSGARGSRNQIRQLAGMRGLMAKTSGDIIELPIISNFKEGLSVIEFFISTNGARKGLADTALKTADAGYLTRRLVDIAQDVVVRIEDCGTINGIKVETVKNGEEILESLKEKAVGSYSIERIKNPITGEIVLDANEEISEAKIELLEKIGIEKLVIRSVLTCEAEHGVCQKCYGRDFSKNKPVNIGEAVGIIAAQSIGQPGTQLTMRTFHIGGVAQAGSEDDKISLKNAFILNGIEGFNVRVDNGILFTRKGTLKIINVFYEEKIKNIKEIKVLDSQRVIKGIPLFIDKKGSEILSSYIGYVKLRDDNFFIVSEEQEVSLKAGTKLEIEVGDYVESGKVIGTFDPFAEPIIAEVKGKIKFKDIILGTTLKEEINTETGNVEKRITDNVFESLDPRIFIIDSSGMEVASYVLPGDAYLQVEDGQSINIGDIIAKLSKGSEKTQDITGGLPRVNDLFETRIPKNLTEMAKVSGIVQFKSIQKGKRLINILDEYGVEHKHYIPAGKHLLVRDGDVVKAGDMLCDGRINPHDVLEILGGISLQEFLLAEIQDVYRKQGVSINDKHIGVIIKQMMKKVKIVAVGDTNFVYGQKVDKHTFYEQNRKVIKQGGEPAIASPILIGVTKTSLNIDSFISAASFQETTKVLTDASIAGKIDDLRGLKENVVIGHLIPTGTGMGLYKKIKVSENIDSEV</sequence>
<keyword id="KW-0240">DNA-directed RNA polymerase</keyword>
<keyword id="KW-0460">Magnesium</keyword>
<keyword id="KW-0479">Metal-binding</keyword>
<keyword id="KW-0548">Nucleotidyltransferase</keyword>
<keyword id="KW-0804">Transcription</keyword>
<keyword id="KW-0808">Transferase</keyword>
<keyword id="KW-0862">Zinc</keyword>
<name>RPOC_BORBZ</name>
<dbReference type="EC" id="2.7.7.6" evidence="1"/>
<dbReference type="EMBL" id="CP001205">
    <property type="protein sequence ID" value="ACK74824.1"/>
    <property type="molecule type" value="Genomic_DNA"/>
</dbReference>
<dbReference type="RefSeq" id="WP_012597363.1">
    <property type="nucleotide sequence ID" value="NC_011728.1"/>
</dbReference>
<dbReference type="SMR" id="B7J1W0"/>
<dbReference type="KEGG" id="bbz:BbuZS7_0390"/>
<dbReference type="HOGENOM" id="CLU_000524_3_1_12"/>
<dbReference type="Proteomes" id="UP000006901">
    <property type="component" value="Chromosome"/>
</dbReference>
<dbReference type="GO" id="GO:0000428">
    <property type="term" value="C:DNA-directed RNA polymerase complex"/>
    <property type="evidence" value="ECO:0007669"/>
    <property type="project" value="UniProtKB-KW"/>
</dbReference>
<dbReference type="GO" id="GO:0003677">
    <property type="term" value="F:DNA binding"/>
    <property type="evidence" value="ECO:0007669"/>
    <property type="project" value="UniProtKB-UniRule"/>
</dbReference>
<dbReference type="GO" id="GO:0003899">
    <property type="term" value="F:DNA-directed RNA polymerase activity"/>
    <property type="evidence" value="ECO:0007669"/>
    <property type="project" value="UniProtKB-UniRule"/>
</dbReference>
<dbReference type="GO" id="GO:0000287">
    <property type="term" value="F:magnesium ion binding"/>
    <property type="evidence" value="ECO:0007669"/>
    <property type="project" value="UniProtKB-UniRule"/>
</dbReference>
<dbReference type="GO" id="GO:0008270">
    <property type="term" value="F:zinc ion binding"/>
    <property type="evidence" value="ECO:0007669"/>
    <property type="project" value="UniProtKB-UniRule"/>
</dbReference>
<dbReference type="GO" id="GO:0006351">
    <property type="term" value="P:DNA-templated transcription"/>
    <property type="evidence" value="ECO:0007669"/>
    <property type="project" value="UniProtKB-UniRule"/>
</dbReference>
<dbReference type="CDD" id="cd02655">
    <property type="entry name" value="RNAP_beta'_C"/>
    <property type="match status" value="1"/>
</dbReference>
<dbReference type="CDD" id="cd01609">
    <property type="entry name" value="RNAP_beta'_N"/>
    <property type="match status" value="1"/>
</dbReference>
<dbReference type="Gene3D" id="1.10.132.30">
    <property type="match status" value="1"/>
</dbReference>
<dbReference type="Gene3D" id="1.10.150.390">
    <property type="match status" value="1"/>
</dbReference>
<dbReference type="Gene3D" id="1.10.1790.20">
    <property type="match status" value="1"/>
</dbReference>
<dbReference type="Gene3D" id="1.10.40.90">
    <property type="match status" value="1"/>
</dbReference>
<dbReference type="Gene3D" id="2.40.40.20">
    <property type="match status" value="1"/>
</dbReference>
<dbReference type="Gene3D" id="2.40.50.100">
    <property type="match status" value="2"/>
</dbReference>
<dbReference type="Gene3D" id="4.10.860.120">
    <property type="entry name" value="RNA polymerase II, clamp domain"/>
    <property type="match status" value="1"/>
</dbReference>
<dbReference type="Gene3D" id="1.10.274.100">
    <property type="entry name" value="RNA polymerase Rpb1, domain 3"/>
    <property type="match status" value="1"/>
</dbReference>
<dbReference type="HAMAP" id="MF_01322">
    <property type="entry name" value="RNApol_bact_RpoC"/>
    <property type="match status" value="1"/>
</dbReference>
<dbReference type="InterPro" id="IPR045867">
    <property type="entry name" value="DNA-dir_RpoC_beta_prime"/>
</dbReference>
<dbReference type="InterPro" id="IPR012754">
    <property type="entry name" value="DNA-dir_RpoC_beta_prime_bact"/>
</dbReference>
<dbReference type="InterPro" id="IPR000722">
    <property type="entry name" value="RNA_pol_asu"/>
</dbReference>
<dbReference type="InterPro" id="IPR006592">
    <property type="entry name" value="RNA_pol_N"/>
</dbReference>
<dbReference type="InterPro" id="IPR007080">
    <property type="entry name" value="RNA_pol_Rpb1_1"/>
</dbReference>
<dbReference type="InterPro" id="IPR007066">
    <property type="entry name" value="RNA_pol_Rpb1_3"/>
</dbReference>
<dbReference type="InterPro" id="IPR042102">
    <property type="entry name" value="RNA_pol_Rpb1_3_sf"/>
</dbReference>
<dbReference type="InterPro" id="IPR007083">
    <property type="entry name" value="RNA_pol_Rpb1_4"/>
</dbReference>
<dbReference type="InterPro" id="IPR007081">
    <property type="entry name" value="RNA_pol_Rpb1_5"/>
</dbReference>
<dbReference type="InterPro" id="IPR044893">
    <property type="entry name" value="RNA_pol_Rpb1_clamp_domain"/>
</dbReference>
<dbReference type="InterPro" id="IPR038120">
    <property type="entry name" value="Rpb1_funnel_sf"/>
</dbReference>
<dbReference type="NCBIfam" id="TIGR02386">
    <property type="entry name" value="rpoC_TIGR"/>
    <property type="match status" value="1"/>
</dbReference>
<dbReference type="PANTHER" id="PTHR19376">
    <property type="entry name" value="DNA-DIRECTED RNA POLYMERASE"/>
    <property type="match status" value="1"/>
</dbReference>
<dbReference type="PANTHER" id="PTHR19376:SF54">
    <property type="entry name" value="DNA-DIRECTED RNA POLYMERASE SUBUNIT BETA"/>
    <property type="match status" value="1"/>
</dbReference>
<dbReference type="Pfam" id="PF04997">
    <property type="entry name" value="RNA_pol_Rpb1_1"/>
    <property type="match status" value="1"/>
</dbReference>
<dbReference type="Pfam" id="PF00623">
    <property type="entry name" value="RNA_pol_Rpb1_2"/>
    <property type="match status" value="2"/>
</dbReference>
<dbReference type="Pfam" id="PF04983">
    <property type="entry name" value="RNA_pol_Rpb1_3"/>
    <property type="match status" value="1"/>
</dbReference>
<dbReference type="Pfam" id="PF05000">
    <property type="entry name" value="RNA_pol_Rpb1_4"/>
    <property type="match status" value="1"/>
</dbReference>
<dbReference type="Pfam" id="PF04998">
    <property type="entry name" value="RNA_pol_Rpb1_5"/>
    <property type="match status" value="1"/>
</dbReference>
<dbReference type="SMART" id="SM00663">
    <property type="entry name" value="RPOLA_N"/>
    <property type="match status" value="1"/>
</dbReference>
<dbReference type="SUPFAM" id="SSF64484">
    <property type="entry name" value="beta and beta-prime subunits of DNA dependent RNA-polymerase"/>
    <property type="match status" value="1"/>
</dbReference>
<reference key="1">
    <citation type="journal article" date="2011" name="J. Bacteriol.">
        <title>Whole-genome sequences of thirteen isolates of Borrelia burgdorferi.</title>
        <authorList>
            <person name="Schutzer S.E."/>
            <person name="Fraser-Liggett C.M."/>
            <person name="Casjens S.R."/>
            <person name="Qiu W.G."/>
            <person name="Dunn J.J."/>
            <person name="Mongodin E.F."/>
            <person name="Luft B.J."/>
        </authorList>
    </citation>
    <scope>NUCLEOTIDE SEQUENCE [LARGE SCALE GENOMIC DNA]</scope>
    <source>
        <strain>ZS7</strain>
    </source>
</reference>
<comment type="function">
    <text evidence="1">DNA-dependent RNA polymerase catalyzes the transcription of DNA into RNA using the four ribonucleoside triphosphates as substrates.</text>
</comment>
<comment type="catalytic activity">
    <reaction evidence="1">
        <text>RNA(n) + a ribonucleoside 5'-triphosphate = RNA(n+1) + diphosphate</text>
        <dbReference type="Rhea" id="RHEA:21248"/>
        <dbReference type="Rhea" id="RHEA-COMP:14527"/>
        <dbReference type="Rhea" id="RHEA-COMP:17342"/>
        <dbReference type="ChEBI" id="CHEBI:33019"/>
        <dbReference type="ChEBI" id="CHEBI:61557"/>
        <dbReference type="ChEBI" id="CHEBI:140395"/>
        <dbReference type="EC" id="2.7.7.6"/>
    </reaction>
</comment>
<comment type="cofactor">
    <cofactor evidence="1">
        <name>Mg(2+)</name>
        <dbReference type="ChEBI" id="CHEBI:18420"/>
    </cofactor>
    <text evidence="1">Binds 1 Mg(2+) ion per subunit.</text>
</comment>
<comment type="cofactor">
    <cofactor evidence="1">
        <name>Zn(2+)</name>
        <dbReference type="ChEBI" id="CHEBI:29105"/>
    </cofactor>
    <text evidence="1">Binds 2 Zn(2+) ions per subunit.</text>
</comment>
<comment type="subunit">
    <text evidence="1">The RNAP catalytic core consists of 2 alpha, 1 beta, 1 beta' and 1 omega subunit. When a sigma factor is associated with the core the holoenzyme is formed, which can initiate transcription.</text>
</comment>
<comment type="similarity">
    <text evidence="1">Belongs to the RNA polymerase beta' chain family.</text>
</comment>
<evidence type="ECO:0000255" key="1">
    <source>
        <dbReference type="HAMAP-Rule" id="MF_01322"/>
    </source>
</evidence>
<protein>
    <recommendedName>
        <fullName evidence="1">DNA-directed RNA polymerase subunit beta'</fullName>
        <shortName evidence="1">RNAP subunit beta'</shortName>
        <ecNumber evidence="1">2.7.7.6</ecNumber>
    </recommendedName>
    <alternativeName>
        <fullName evidence="1">RNA polymerase subunit beta'</fullName>
    </alternativeName>
    <alternativeName>
        <fullName evidence="1">Transcriptase subunit beta'</fullName>
    </alternativeName>
</protein>